<evidence type="ECO:0000255" key="1">
    <source>
        <dbReference type="HAMAP-Rule" id="MF_00083"/>
    </source>
</evidence>
<name>PTH_YERP3</name>
<keyword id="KW-0963">Cytoplasm</keyword>
<keyword id="KW-0378">Hydrolase</keyword>
<keyword id="KW-0694">RNA-binding</keyword>
<keyword id="KW-0820">tRNA-binding</keyword>
<protein>
    <recommendedName>
        <fullName evidence="1">Peptidyl-tRNA hydrolase</fullName>
        <shortName evidence="1">Pth</shortName>
        <ecNumber evidence="1">3.1.1.29</ecNumber>
    </recommendedName>
</protein>
<dbReference type="EC" id="3.1.1.29" evidence="1"/>
<dbReference type="EMBL" id="CP000720">
    <property type="protein sequence ID" value="ABS49847.1"/>
    <property type="molecule type" value="Genomic_DNA"/>
</dbReference>
<dbReference type="RefSeq" id="WP_012105144.1">
    <property type="nucleotide sequence ID" value="NC_009708.1"/>
</dbReference>
<dbReference type="SMR" id="A7FIG9"/>
<dbReference type="KEGG" id="ypi:YpsIP31758_2074"/>
<dbReference type="HOGENOM" id="CLU_062456_3_1_6"/>
<dbReference type="Proteomes" id="UP000002412">
    <property type="component" value="Chromosome"/>
</dbReference>
<dbReference type="GO" id="GO:0005737">
    <property type="term" value="C:cytoplasm"/>
    <property type="evidence" value="ECO:0007669"/>
    <property type="project" value="UniProtKB-SubCell"/>
</dbReference>
<dbReference type="GO" id="GO:0004045">
    <property type="term" value="F:peptidyl-tRNA hydrolase activity"/>
    <property type="evidence" value="ECO:0007669"/>
    <property type="project" value="UniProtKB-UniRule"/>
</dbReference>
<dbReference type="GO" id="GO:0000049">
    <property type="term" value="F:tRNA binding"/>
    <property type="evidence" value="ECO:0007669"/>
    <property type="project" value="UniProtKB-UniRule"/>
</dbReference>
<dbReference type="GO" id="GO:0006515">
    <property type="term" value="P:protein quality control for misfolded or incompletely synthesized proteins"/>
    <property type="evidence" value="ECO:0007669"/>
    <property type="project" value="UniProtKB-UniRule"/>
</dbReference>
<dbReference type="GO" id="GO:0072344">
    <property type="term" value="P:rescue of stalled ribosome"/>
    <property type="evidence" value="ECO:0007669"/>
    <property type="project" value="UniProtKB-UniRule"/>
</dbReference>
<dbReference type="CDD" id="cd00462">
    <property type="entry name" value="PTH"/>
    <property type="match status" value="1"/>
</dbReference>
<dbReference type="FunFam" id="3.40.50.1470:FF:000001">
    <property type="entry name" value="Peptidyl-tRNA hydrolase"/>
    <property type="match status" value="1"/>
</dbReference>
<dbReference type="Gene3D" id="3.40.50.1470">
    <property type="entry name" value="Peptidyl-tRNA hydrolase"/>
    <property type="match status" value="1"/>
</dbReference>
<dbReference type="HAMAP" id="MF_00083">
    <property type="entry name" value="Pept_tRNA_hydro_bact"/>
    <property type="match status" value="1"/>
</dbReference>
<dbReference type="InterPro" id="IPR001328">
    <property type="entry name" value="Pept_tRNA_hydro"/>
</dbReference>
<dbReference type="InterPro" id="IPR018171">
    <property type="entry name" value="Pept_tRNA_hydro_CS"/>
</dbReference>
<dbReference type="InterPro" id="IPR036416">
    <property type="entry name" value="Pept_tRNA_hydro_sf"/>
</dbReference>
<dbReference type="NCBIfam" id="TIGR00447">
    <property type="entry name" value="pth"/>
    <property type="match status" value="1"/>
</dbReference>
<dbReference type="PANTHER" id="PTHR17224">
    <property type="entry name" value="PEPTIDYL-TRNA HYDROLASE"/>
    <property type="match status" value="1"/>
</dbReference>
<dbReference type="PANTHER" id="PTHR17224:SF1">
    <property type="entry name" value="PEPTIDYL-TRNA HYDROLASE"/>
    <property type="match status" value="1"/>
</dbReference>
<dbReference type="Pfam" id="PF01195">
    <property type="entry name" value="Pept_tRNA_hydro"/>
    <property type="match status" value="1"/>
</dbReference>
<dbReference type="SUPFAM" id="SSF53178">
    <property type="entry name" value="Peptidyl-tRNA hydrolase-like"/>
    <property type="match status" value="1"/>
</dbReference>
<dbReference type="PROSITE" id="PS01195">
    <property type="entry name" value="PEPT_TRNA_HYDROL_1"/>
    <property type="match status" value="1"/>
</dbReference>
<dbReference type="PROSITE" id="PS01196">
    <property type="entry name" value="PEPT_TRNA_HYDROL_2"/>
    <property type="match status" value="1"/>
</dbReference>
<gene>
    <name evidence="1" type="primary">pth</name>
    <name type="ordered locus">YpsIP31758_2074</name>
</gene>
<feature type="chain" id="PRO_1000057555" description="Peptidyl-tRNA hydrolase">
    <location>
        <begin position="1"/>
        <end position="196"/>
    </location>
</feature>
<feature type="active site" description="Proton acceptor" evidence="1">
    <location>
        <position position="22"/>
    </location>
</feature>
<feature type="binding site" evidence="1">
    <location>
        <position position="17"/>
    </location>
    <ligand>
        <name>tRNA</name>
        <dbReference type="ChEBI" id="CHEBI:17843"/>
    </ligand>
</feature>
<feature type="binding site" evidence="1">
    <location>
        <position position="68"/>
    </location>
    <ligand>
        <name>tRNA</name>
        <dbReference type="ChEBI" id="CHEBI:17843"/>
    </ligand>
</feature>
<feature type="binding site" evidence="1">
    <location>
        <position position="70"/>
    </location>
    <ligand>
        <name>tRNA</name>
        <dbReference type="ChEBI" id="CHEBI:17843"/>
    </ligand>
</feature>
<feature type="binding site" evidence="1">
    <location>
        <position position="116"/>
    </location>
    <ligand>
        <name>tRNA</name>
        <dbReference type="ChEBI" id="CHEBI:17843"/>
    </ligand>
</feature>
<feature type="site" description="Discriminates between blocked and unblocked aminoacyl-tRNA" evidence="1">
    <location>
        <position position="12"/>
    </location>
</feature>
<feature type="site" description="Stabilizes the basic form of H active site to accept a proton" evidence="1">
    <location>
        <position position="95"/>
    </location>
</feature>
<comment type="function">
    <text evidence="1">Hydrolyzes ribosome-free peptidyl-tRNAs (with 1 or more amino acids incorporated), which drop off the ribosome during protein synthesis, or as a result of ribosome stalling.</text>
</comment>
<comment type="function">
    <text evidence="1">Catalyzes the release of premature peptidyl moieties from peptidyl-tRNA molecules trapped in stalled 50S ribosomal subunits, and thus maintains levels of free tRNAs and 50S ribosomes.</text>
</comment>
<comment type="catalytic activity">
    <reaction evidence="1">
        <text>an N-acyl-L-alpha-aminoacyl-tRNA + H2O = an N-acyl-L-amino acid + a tRNA + H(+)</text>
        <dbReference type="Rhea" id="RHEA:54448"/>
        <dbReference type="Rhea" id="RHEA-COMP:10123"/>
        <dbReference type="Rhea" id="RHEA-COMP:13883"/>
        <dbReference type="ChEBI" id="CHEBI:15377"/>
        <dbReference type="ChEBI" id="CHEBI:15378"/>
        <dbReference type="ChEBI" id="CHEBI:59874"/>
        <dbReference type="ChEBI" id="CHEBI:78442"/>
        <dbReference type="ChEBI" id="CHEBI:138191"/>
        <dbReference type="EC" id="3.1.1.29"/>
    </reaction>
</comment>
<comment type="subunit">
    <text evidence="1">Monomer.</text>
</comment>
<comment type="subcellular location">
    <subcellularLocation>
        <location evidence="1">Cytoplasm</location>
    </subcellularLocation>
</comment>
<comment type="similarity">
    <text evidence="1">Belongs to the PTH family.</text>
</comment>
<organism>
    <name type="scientific">Yersinia pseudotuberculosis serotype O:1b (strain IP 31758)</name>
    <dbReference type="NCBI Taxonomy" id="349747"/>
    <lineage>
        <taxon>Bacteria</taxon>
        <taxon>Pseudomonadati</taxon>
        <taxon>Pseudomonadota</taxon>
        <taxon>Gammaproteobacteria</taxon>
        <taxon>Enterobacterales</taxon>
        <taxon>Yersiniaceae</taxon>
        <taxon>Yersinia</taxon>
    </lineage>
</organism>
<reference key="1">
    <citation type="journal article" date="2007" name="PLoS Genet.">
        <title>The complete genome sequence of Yersinia pseudotuberculosis IP31758, the causative agent of Far East scarlet-like fever.</title>
        <authorList>
            <person name="Eppinger M."/>
            <person name="Rosovitz M.J."/>
            <person name="Fricke W.F."/>
            <person name="Rasko D.A."/>
            <person name="Kokorina G."/>
            <person name="Fayolle C."/>
            <person name="Lindler L.E."/>
            <person name="Carniel E."/>
            <person name="Ravel J."/>
        </authorList>
    </citation>
    <scope>NUCLEOTIDE SEQUENCE [LARGE SCALE GENOMIC DNA]</scope>
    <source>
        <strain>IP 31758</strain>
    </source>
</reference>
<accession>A7FIG9</accession>
<sequence>MSSIKLIVGLANPGAEYAQTRHNAGAWYVDLLAERHNQSLKEESKFFGYTARLNLAGQDIRLLVPATFMNLSGKAVAAMASFYRILPEEILVAHDELDILPGMAKLKLGGGNGGHNGLKDIQNKLGNNPNFYRLRIGIGHPGDKSKVTGFVLGKPPASEQTLIDNAIDESIRCTEVLLNEGMTKAMNRLHAFKASA</sequence>
<proteinExistence type="inferred from homology"/>